<gene>
    <name type="primary">IN2-1</name>
    <name type="synonym">SAF1</name>
</gene>
<reference key="1">
    <citation type="journal article" date="1991" name="Plant Mol. Biol.">
        <title>Isolation and characterization of cDNA clones for RNA species induced by substituted benzenesulfonamides in corn.</title>
        <authorList>
            <person name="Hershey H.P."/>
            <person name="Stoner T.D."/>
        </authorList>
    </citation>
    <scope>NUCLEOTIDE SEQUENCE [MRNA]</scope>
    <source>
        <strain>cv. Missouri 17</strain>
    </source>
</reference>
<sequence length="243" mass="26989">MAAAAGPSSSVKESLPPALGSTSQPPPVFDGTTRLYICYFCPFAQRAWVTRNLKGLQDKMELVAIDLQDKPAWYKDKVYAQGTVPSLEHDSEVRGESLDLIRYIDSNFDGPALLPEDAAKRQFADELFASANAFTKALYSPLLSHAAVSDEVVAALDKLEADLSKFDDGPFFLGQFSLADVAYVTILERVQIYYSHLRNYDIAQGRPNLQEFIDEMNKIEAYAQTKNDPLFLLDLAKSHLKIA</sequence>
<proteinExistence type="evidence at transcript level"/>
<dbReference type="EMBL" id="X58573">
    <property type="protein sequence ID" value="CAA41447.1"/>
    <property type="molecule type" value="mRNA"/>
</dbReference>
<dbReference type="PIR" id="S17743">
    <property type="entry name" value="S17743"/>
</dbReference>
<dbReference type="RefSeq" id="NP_001105433.1">
    <property type="nucleotide sequence ID" value="NM_001111963.1"/>
</dbReference>
<dbReference type="SMR" id="P49248"/>
<dbReference type="FunCoup" id="P49248">
    <property type="interactions" value="308"/>
</dbReference>
<dbReference type="STRING" id="4577.P49248"/>
<dbReference type="PaxDb" id="4577-GRMZM2G084369_P01"/>
<dbReference type="GeneID" id="542388"/>
<dbReference type="KEGG" id="zma:542388"/>
<dbReference type="MaizeGDB" id="121983"/>
<dbReference type="eggNOG" id="KOG0406">
    <property type="taxonomic scope" value="Eukaryota"/>
</dbReference>
<dbReference type="InParanoid" id="P49248"/>
<dbReference type="OrthoDB" id="4951845at2759"/>
<dbReference type="Proteomes" id="UP000007305">
    <property type="component" value="Unplaced"/>
</dbReference>
<dbReference type="ExpressionAtlas" id="P49248">
    <property type="expression patterns" value="baseline and differential"/>
</dbReference>
<dbReference type="GO" id="GO:0004364">
    <property type="term" value="F:glutathione transferase activity"/>
    <property type="evidence" value="ECO:0000318"/>
    <property type="project" value="GO_Central"/>
</dbReference>
<dbReference type="CDD" id="cd03203">
    <property type="entry name" value="GST_C_Lambda"/>
    <property type="match status" value="1"/>
</dbReference>
<dbReference type="FunFam" id="3.40.30.10:FF:000091">
    <property type="entry name" value="Glutathione S-transferase L2, chloroplastic"/>
    <property type="match status" value="1"/>
</dbReference>
<dbReference type="FunFam" id="1.20.1050.10:FF:000041">
    <property type="entry name" value="Lambda class glutathione S-transferase"/>
    <property type="match status" value="1"/>
</dbReference>
<dbReference type="Gene3D" id="1.20.1050.10">
    <property type="match status" value="1"/>
</dbReference>
<dbReference type="Gene3D" id="3.40.30.10">
    <property type="entry name" value="Glutaredoxin"/>
    <property type="match status" value="1"/>
</dbReference>
<dbReference type="InterPro" id="IPR036282">
    <property type="entry name" value="Glutathione-S-Trfase_C_sf"/>
</dbReference>
<dbReference type="InterPro" id="IPR040079">
    <property type="entry name" value="Glutathione_S-Trfase"/>
</dbReference>
<dbReference type="InterPro" id="IPR004045">
    <property type="entry name" value="Glutathione_S-Trfase_N"/>
</dbReference>
<dbReference type="InterPro" id="IPR044629">
    <property type="entry name" value="GSTL1/2/3"/>
</dbReference>
<dbReference type="InterPro" id="IPR036249">
    <property type="entry name" value="Thioredoxin-like_sf"/>
</dbReference>
<dbReference type="PANTHER" id="PTHR44328">
    <property type="entry name" value="GLUTATHIONE S-TRANSFERASE L1"/>
    <property type="match status" value="1"/>
</dbReference>
<dbReference type="PANTHER" id="PTHR44328:SF5">
    <property type="entry name" value="PROTEIN IN2-1 HOMOLOG A"/>
    <property type="match status" value="1"/>
</dbReference>
<dbReference type="Pfam" id="PF13410">
    <property type="entry name" value="GST_C_2"/>
    <property type="match status" value="1"/>
</dbReference>
<dbReference type="Pfam" id="PF13417">
    <property type="entry name" value="GST_N_3"/>
    <property type="match status" value="1"/>
</dbReference>
<dbReference type="SFLD" id="SFLDS00019">
    <property type="entry name" value="Glutathione_Transferase_(cytos"/>
    <property type="match status" value="1"/>
</dbReference>
<dbReference type="SUPFAM" id="SSF47616">
    <property type="entry name" value="GST C-terminal domain-like"/>
    <property type="match status" value="1"/>
</dbReference>
<dbReference type="SUPFAM" id="SSF52833">
    <property type="entry name" value="Thioredoxin-like"/>
    <property type="match status" value="1"/>
</dbReference>
<dbReference type="PROSITE" id="PS50405">
    <property type="entry name" value="GST_CTER"/>
    <property type="match status" value="1"/>
</dbReference>
<dbReference type="PROSITE" id="PS50404">
    <property type="entry name" value="GST_NTER"/>
    <property type="match status" value="1"/>
</dbReference>
<evidence type="ECO:0000250" key="1"/>
<evidence type="ECO:0000256" key="2">
    <source>
        <dbReference type="SAM" id="MobiDB-lite"/>
    </source>
</evidence>
<evidence type="ECO:0000305" key="3"/>
<protein>
    <recommendedName>
        <fullName>Protein IN2-1</fullName>
    </recommendedName>
</protein>
<accession>P49248</accession>
<feature type="chain" id="PRO_0000084192" description="Protein IN2-1">
    <location>
        <begin position="1"/>
        <end position="243"/>
    </location>
</feature>
<feature type="domain" description="GST N-terminal">
    <location>
        <begin position="31"/>
        <end position="112"/>
    </location>
</feature>
<feature type="domain" description="GST C-terminal">
    <location>
        <begin position="109"/>
        <end position="240"/>
    </location>
</feature>
<feature type="region of interest" description="Disordered" evidence="2">
    <location>
        <begin position="1"/>
        <end position="26"/>
    </location>
</feature>
<feature type="binding site" evidence="1">
    <location>
        <position position="70"/>
    </location>
    <ligand>
        <name>glutathione</name>
        <dbReference type="ChEBI" id="CHEBI:57925"/>
    </ligand>
</feature>
<feature type="binding site" evidence="1">
    <location>
        <position position="84"/>
    </location>
    <ligand>
        <name>glutathione</name>
        <dbReference type="ChEBI" id="CHEBI:57925"/>
    </ligand>
</feature>
<feature type="binding site" evidence="1">
    <location>
        <begin position="96"/>
        <end position="97"/>
    </location>
    <ligand>
        <name>glutathione</name>
        <dbReference type="ChEBI" id="CHEBI:57925"/>
    </ligand>
</feature>
<comment type="tissue specificity">
    <text>Leaves and roots. It is more strongly induced in the leaves relative to the roots.</text>
</comment>
<comment type="developmental stage">
    <text>It appears in the roots within 30 minutes of induction, maximum levels are reached by 6 hours, and remains constant for 2 days. In leaves it is seen 9 hours after induction, and reaches maximum levels after 24 hours.</text>
</comment>
<comment type="induction">
    <text>By N-(aminocarbonyl)-2-chlorobenzenesulfonamide (2-CBSU).</text>
</comment>
<comment type="similarity">
    <text evidence="3">Belongs to the GST superfamily. HSP26 family.</text>
</comment>
<name>IN21_MAIZE</name>
<keyword id="KW-1185">Reference proteome</keyword>
<organism>
    <name type="scientific">Zea mays</name>
    <name type="common">Maize</name>
    <dbReference type="NCBI Taxonomy" id="4577"/>
    <lineage>
        <taxon>Eukaryota</taxon>
        <taxon>Viridiplantae</taxon>
        <taxon>Streptophyta</taxon>
        <taxon>Embryophyta</taxon>
        <taxon>Tracheophyta</taxon>
        <taxon>Spermatophyta</taxon>
        <taxon>Magnoliopsida</taxon>
        <taxon>Liliopsida</taxon>
        <taxon>Poales</taxon>
        <taxon>Poaceae</taxon>
        <taxon>PACMAD clade</taxon>
        <taxon>Panicoideae</taxon>
        <taxon>Andropogonodae</taxon>
        <taxon>Andropogoneae</taxon>
        <taxon>Tripsacinae</taxon>
        <taxon>Zea</taxon>
    </lineage>
</organism>